<protein>
    <recommendedName>
        <fullName evidence="5">Potassium channel toxin gamma-KTx 4.2</fullName>
    </recommendedName>
    <alternativeName>
        <fullName evidence="6">CnErgTx5</fullName>
        <shortName evidence="5">CnErg5</shortName>
        <shortName evidence="5">ErgTx5</shortName>
    </alternativeName>
    <alternativeName>
        <fullName evidence="5">Ergtoxin-like protein</fullName>
    </alternativeName>
</protein>
<proteinExistence type="inferred from homology"/>
<dbReference type="EMBL" id="AY159336">
    <property type="protein sequence ID" value="AAO22214.1"/>
    <property type="molecule type" value="mRNA"/>
</dbReference>
<dbReference type="SMR" id="Q86QV7"/>
<dbReference type="GO" id="GO:0005576">
    <property type="term" value="C:extracellular region"/>
    <property type="evidence" value="ECO:0007669"/>
    <property type="project" value="UniProtKB-SubCell"/>
</dbReference>
<dbReference type="GO" id="GO:0019870">
    <property type="term" value="F:potassium channel inhibitor activity"/>
    <property type="evidence" value="ECO:0007669"/>
    <property type="project" value="InterPro"/>
</dbReference>
<dbReference type="GO" id="GO:0090729">
    <property type="term" value="F:toxin activity"/>
    <property type="evidence" value="ECO:0007669"/>
    <property type="project" value="UniProtKB-KW"/>
</dbReference>
<dbReference type="Gene3D" id="3.30.30.10">
    <property type="entry name" value="Knottin, scorpion toxin-like"/>
    <property type="match status" value="1"/>
</dbReference>
<dbReference type="InterPro" id="IPR012622">
    <property type="entry name" value="Ergtoxin"/>
</dbReference>
<dbReference type="InterPro" id="IPR036574">
    <property type="entry name" value="Scorpion_toxin-like_sf"/>
</dbReference>
<dbReference type="Pfam" id="PF08086">
    <property type="entry name" value="Toxin_17"/>
    <property type="match status" value="1"/>
</dbReference>
<dbReference type="SUPFAM" id="SSF57095">
    <property type="entry name" value="Scorpion toxin-like"/>
    <property type="match status" value="1"/>
</dbReference>
<dbReference type="PROSITE" id="PS60026">
    <property type="entry name" value="ERGTX"/>
    <property type="match status" value="1"/>
</dbReference>
<evidence type="ECO:0000250" key="1"/>
<evidence type="ECO:0000250" key="2">
    <source>
        <dbReference type="UniProtKB" id="P59940"/>
    </source>
</evidence>
<evidence type="ECO:0000250" key="3">
    <source>
        <dbReference type="UniProtKB" id="Q86QT3"/>
    </source>
</evidence>
<evidence type="ECO:0000250" key="4">
    <source>
        <dbReference type="UniProtKB" id="Q86QU9"/>
    </source>
</evidence>
<evidence type="ECO:0000303" key="5">
    <source>
    </source>
</evidence>
<evidence type="ECO:0000305" key="6"/>
<organism>
    <name type="scientific">Centruroides noxius</name>
    <name type="common">Mexican scorpion</name>
    <dbReference type="NCBI Taxonomy" id="6878"/>
    <lineage>
        <taxon>Eukaryota</taxon>
        <taxon>Metazoa</taxon>
        <taxon>Ecdysozoa</taxon>
        <taxon>Arthropoda</taxon>
        <taxon>Chelicerata</taxon>
        <taxon>Arachnida</taxon>
        <taxon>Scorpiones</taxon>
        <taxon>Buthida</taxon>
        <taxon>Buthoidea</taxon>
        <taxon>Buthidae</taxon>
        <taxon>Centruroides</taxon>
    </lineage>
</organism>
<accession>Q86QV7</accession>
<reference key="1">
    <citation type="journal article" date="2002" name="FEBS Lett.">
        <title>A large number of novel Ergtoxin-like genes and ERG K+-channels blocking peptides from scorpions of the genus Centruroides.</title>
        <authorList>
            <person name="Corona M."/>
            <person name="Gurrola G.B."/>
            <person name="Merino E."/>
            <person name="Cassulini R.R."/>
            <person name="Valdez-Cruz N.A."/>
            <person name="Garcia B."/>
            <person name="Ramirez-Dominguez M.E."/>
            <person name="Coronas F.I."/>
            <person name="Zamudio F.Z."/>
            <person name="Wanke E."/>
            <person name="Possani L.D."/>
        </authorList>
    </citation>
    <scope>NUCLEOTIDE SEQUENCE [MRNA]</scope>
    <scope>NOMENCLATURE</scope>
    <source>
        <tissue>Venom gland</tissue>
    </source>
</reference>
<name>KGX42_CENNO</name>
<comment type="function">
    <text evidence="2">Reversibly blocks Kv11/ERG potassium channels.</text>
</comment>
<comment type="subcellular location">
    <subcellularLocation>
        <location evidence="4">Secreted</location>
    </subcellularLocation>
</comment>
<comment type="tissue specificity">
    <text evidence="6">Expressed by the venom gland.</text>
</comment>
<comment type="domain">
    <text evidence="1">The presence of a 'disulfide through disulfide knot' structurally defines this protein as a knottin.</text>
</comment>
<comment type="domain">
    <text evidence="3">Has the CSalpha/beta fold, which comprises one or two short alpha helices connected to anti-parallel beta-sheets stabilized by three or four disulfide bonds.</text>
</comment>
<comment type="similarity">
    <text evidence="6">Belongs to the ergtoxin family. Gamma-KTx 4 subfamily.</text>
</comment>
<feature type="chain" id="PRO_0000066843" description="Potassium channel toxin gamma-KTx 4.2">
    <location>
        <begin position="1"/>
        <end position="43"/>
    </location>
</feature>
<feature type="disulfide bond" evidence="3">
    <location>
        <begin position="5"/>
        <end position="23"/>
    </location>
</feature>
<feature type="disulfide bond" evidence="3">
    <location>
        <begin position="11"/>
        <end position="34"/>
    </location>
</feature>
<feature type="disulfide bond" evidence="3">
    <location>
        <begin position="20"/>
        <end position="39"/>
    </location>
</feature>
<feature type="disulfide bond" evidence="3">
    <location>
        <begin position="24"/>
        <end position="41"/>
    </location>
</feature>
<keyword id="KW-1015">Disulfide bond</keyword>
<keyword id="KW-0872">Ion channel impairing toxin</keyword>
<keyword id="KW-0960">Knottin</keyword>
<keyword id="KW-0528">Neurotoxin</keyword>
<keyword id="KW-0632">Potassium channel impairing toxin</keyword>
<keyword id="KW-0964">Secreted</keyword>
<keyword id="KW-0800">Toxin</keyword>
<keyword id="KW-1220">Voltage-gated potassium channel impairing toxin</keyword>
<sequence>DRDSCVDKSKCGKYGYYQECQDCCKNAGHNGGTCVYYKCKCNP</sequence>